<name>ARLY_STRSY</name>
<comment type="catalytic activity">
    <reaction evidence="1">
        <text>2-(N(omega)-L-arginino)succinate = fumarate + L-arginine</text>
        <dbReference type="Rhea" id="RHEA:24020"/>
        <dbReference type="ChEBI" id="CHEBI:29806"/>
        <dbReference type="ChEBI" id="CHEBI:32682"/>
        <dbReference type="ChEBI" id="CHEBI:57472"/>
        <dbReference type="EC" id="4.3.2.1"/>
    </reaction>
</comment>
<comment type="pathway">
    <text evidence="1">Amino-acid biosynthesis; L-arginine biosynthesis; L-arginine from L-ornithine and carbamoyl phosphate: step 3/3.</text>
</comment>
<comment type="subcellular location">
    <subcellularLocation>
        <location evidence="1">Cytoplasm</location>
    </subcellularLocation>
</comment>
<comment type="similarity">
    <text evidence="1">Belongs to the lyase 1 family. Argininosuccinate lyase subfamily.</text>
</comment>
<sequence>MEAKKLWGGRFEASLEEWVEEFGASIRFDQKLAKYDIQGSLAHVKMLGQTRIISQAEAQVIQAGLEELLEEYEAGKLVFDIRNEDIHMNIESLLTEKIGSVAGKLHTARSRNDQVATDMHLYLKDTLFQVVDKLTNLRQILVDLAQEHVETIMPGYTHLQHAQPISFAQHLLAYYNMFSRDSERFAFNMQHTNVSPLGAAALAGTTFPIDRQMTSDLMGFAKPYSNSLDAVSDRDFILEFLSNASILMMHMSRLCEEIINWCSYEYQFVTLSDTFSTGSSIMPQKKNPDMAELIRGKTGRVYGNLVGLLTVMKSLPLTYNKDLQEDKEGMFDTAETVLISIDILAGMLKTMTVHKERMAQSTEKDFSNATELADYLASKGLPFRQAHEIVGKLVLECSKAGHYLQDVSFETYQAISPLIQADIYDALSSKVAVSRRNSLGGTGFESIADQLKSAKEEIQNAKSL</sequence>
<organism>
    <name type="scientific">Streptococcus suis (strain 05ZYH33)</name>
    <dbReference type="NCBI Taxonomy" id="391295"/>
    <lineage>
        <taxon>Bacteria</taxon>
        <taxon>Bacillati</taxon>
        <taxon>Bacillota</taxon>
        <taxon>Bacilli</taxon>
        <taxon>Lactobacillales</taxon>
        <taxon>Streptococcaceae</taxon>
        <taxon>Streptococcus</taxon>
    </lineage>
</organism>
<accession>A4VXZ3</accession>
<protein>
    <recommendedName>
        <fullName evidence="1">Argininosuccinate lyase</fullName>
        <shortName evidence="1">ASAL</shortName>
        <ecNumber evidence="1">4.3.2.1</ecNumber>
    </recommendedName>
    <alternativeName>
        <fullName evidence="1">Arginosuccinase</fullName>
    </alternativeName>
</protein>
<gene>
    <name evidence="1" type="primary">argH</name>
    <name type="ordered locus">SSU05_2016</name>
</gene>
<keyword id="KW-0028">Amino-acid biosynthesis</keyword>
<keyword id="KW-0055">Arginine biosynthesis</keyword>
<keyword id="KW-0963">Cytoplasm</keyword>
<keyword id="KW-0456">Lyase</keyword>
<reference key="1">
    <citation type="journal article" date="2007" name="PLoS ONE">
        <title>A glimpse of streptococcal toxic shock syndrome from comparative genomics of S. suis 2 Chinese isolates.</title>
        <authorList>
            <person name="Chen C."/>
            <person name="Tang J."/>
            <person name="Dong W."/>
            <person name="Wang C."/>
            <person name="Feng Y."/>
            <person name="Wang J."/>
            <person name="Zheng F."/>
            <person name="Pan X."/>
            <person name="Liu D."/>
            <person name="Li M."/>
            <person name="Song Y."/>
            <person name="Zhu X."/>
            <person name="Sun H."/>
            <person name="Feng T."/>
            <person name="Guo Z."/>
            <person name="Ju A."/>
            <person name="Ge J."/>
            <person name="Dong Y."/>
            <person name="Sun W."/>
            <person name="Jiang Y."/>
            <person name="Wang J."/>
            <person name="Yan J."/>
            <person name="Yang H."/>
            <person name="Wang X."/>
            <person name="Gao G.F."/>
            <person name="Yang R."/>
            <person name="Wang J."/>
            <person name="Yu J."/>
        </authorList>
    </citation>
    <scope>NUCLEOTIDE SEQUENCE [LARGE SCALE GENOMIC DNA]</scope>
    <source>
        <strain>05ZYH33</strain>
    </source>
</reference>
<evidence type="ECO:0000255" key="1">
    <source>
        <dbReference type="HAMAP-Rule" id="MF_00006"/>
    </source>
</evidence>
<feature type="chain" id="PRO_0000321457" description="Argininosuccinate lyase">
    <location>
        <begin position="1"/>
        <end position="464"/>
    </location>
</feature>
<dbReference type="EC" id="4.3.2.1" evidence="1"/>
<dbReference type="EMBL" id="CP000407">
    <property type="protein sequence ID" value="ABP90982.1"/>
    <property type="molecule type" value="Genomic_DNA"/>
</dbReference>
<dbReference type="SMR" id="A4VXZ3"/>
<dbReference type="STRING" id="391295.SSU05_2016"/>
<dbReference type="KEGG" id="ssu:SSU05_2016"/>
<dbReference type="eggNOG" id="COG0165">
    <property type="taxonomic scope" value="Bacteria"/>
</dbReference>
<dbReference type="HOGENOM" id="CLU_027272_2_3_9"/>
<dbReference type="UniPathway" id="UPA00068">
    <property type="reaction ID" value="UER00114"/>
</dbReference>
<dbReference type="GO" id="GO:0005829">
    <property type="term" value="C:cytosol"/>
    <property type="evidence" value="ECO:0007669"/>
    <property type="project" value="TreeGrafter"/>
</dbReference>
<dbReference type="GO" id="GO:0004056">
    <property type="term" value="F:argininosuccinate lyase activity"/>
    <property type="evidence" value="ECO:0007669"/>
    <property type="project" value="UniProtKB-UniRule"/>
</dbReference>
<dbReference type="GO" id="GO:0042450">
    <property type="term" value="P:arginine biosynthetic process via ornithine"/>
    <property type="evidence" value="ECO:0007669"/>
    <property type="project" value="InterPro"/>
</dbReference>
<dbReference type="GO" id="GO:0006526">
    <property type="term" value="P:L-arginine biosynthetic process"/>
    <property type="evidence" value="ECO:0007669"/>
    <property type="project" value="UniProtKB-UniRule"/>
</dbReference>
<dbReference type="CDD" id="cd01359">
    <property type="entry name" value="Argininosuccinate_lyase"/>
    <property type="match status" value="1"/>
</dbReference>
<dbReference type="FunFam" id="1.10.275.10:FF:000002">
    <property type="entry name" value="Argininosuccinate lyase"/>
    <property type="match status" value="1"/>
</dbReference>
<dbReference type="FunFam" id="1.10.40.30:FF:000001">
    <property type="entry name" value="Argininosuccinate lyase"/>
    <property type="match status" value="1"/>
</dbReference>
<dbReference type="FunFam" id="1.20.200.10:FF:000002">
    <property type="entry name" value="Argininosuccinate lyase"/>
    <property type="match status" value="1"/>
</dbReference>
<dbReference type="Gene3D" id="1.10.40.30">
    <property type="entry name" value="Fumarase/aspartase (C-terminal domain)"/>
    <property type="match status" value="1"/>
</dbReference>
<dbReference type="Gene3D" id="1.20.200.10">
    <property type="entry name" value="Fumarase/aspartase (Central domain)"/>
    <property type="match status" value="1"/>
</dbReference>
<dbReference type="Gene3D" id="1.10.275.10">
    <property type="entry name" value="Fumarase/aspartase (N-terminal domain)"/>
    <property type="match status" value="1"/>
</dbReference>
<dbReference type="HAMAP" id="MF_00006">
    <property type="entry name" value="Arg_succ_lyase"/>
    <property type="match status" value="1"/>
</dbReference>
<dbReference type="InterPro" id="IPR029419">
    <property type="entry name" value="Arg_succ_lyase_C"/>
</dbReference>
<dbReference type="InterPro" id="IPR009049">
    <property type="entry name" value="Argininosuccinate_lyase"/>
</dbReference>
<dbReference type="InterPro" id="IPR024083">
    <property type="entry name" value="Fumarase/histidase_N"/>
</dbReference>
<dbReference type="InterPro" id="IPR020557">
    <property type="entry name" value="Fumarate_lyase_CS"/>
</dbReference>
<dbReference type="InterPro" id="IPR000362">
    <property type="entry name" value="Fumarate_lyase_fam"/>
</dbReference>
<dbReference type="InterPro" id="IPR022761">
    <property type="entry name" value="Fumarate_lyase_N"/>
</dbReference>
<dbReference type="InterPro" id="IPR008948">
    <property type="entry name" value="L-Aspartase-like"/>
</dbReference>
<dbReference type="NCBIfam" id="TIGR00838">
    <property type="entry name" value="argH"/>
    <property type="match status" value="1"/>
</dbReference>
<dbReference type="PANTHER" id="PTHR43814">
    <property type="entry name" value="ARGININOSUCCINATE LYASE"/>
    <property type="match status" value="1"/>
</dbReference>
<dbReference type="PANTHER" id="PTHR43814:SF1">
    <property type="entry name" value="ARGININOSUCCINATE LYASE"/>
    <property type="match status" value="1"/>
</dbReference>
<dbReference type="Pfam" id="PF14698">
    <property type="entry name" value="ASL_C2"/>
    <property type="match status" value="1"/>
</dbReference>
<dbReference type="Pfam" id="PF00206">
    <property type="entry name" value="Lyase_1"/>
    <property type="match status" value="1"/>
</dbReference>
<dbReference type="PRINTS" id="PR00145">
    <property type="entry name" value="ARGSUCLYASE"/>
</dbReference>
<dbReference type="PRINTS" id="PR00149">
    <property type="entry name" value="FUMRATELYASE"/>
</dbReference>
<dbReference type="SUPFAM" id="SSF48557">
    <property type="entry name" value="L-aspartase-like"/>
    <property type="match status" value="1"/>
</dbReference>
<dbReference type="PROSITE" id="PS00163">
    <property type="entry name" value="FUMARATE_LYASES"/>
    <property type="match status" value="1"/>
</dbReference>
<proteinExistence type="inferred from homology"/>